<keyword id="KW-0963">Cytoplasm</keyword>
<keyword id="KW-0378">Hydrolase</keyword>
<keyword id="KW-0479">Metal-binding</keyword>
<keyword id="KW-0533">Nickel</keyword>
<keyword id="KW-1185">Reference proteome</keyword>
<gene>
    <name evidence="1" type="primary">ureC</name>
    <name type="ordered locus">CHU_1261</name>
</gene>
<sequence>MSYILSRKSYADMFGVTTGDKITLGDTNLLVRVEKDLTVYGEECKFGGGKVLRDGMGQASGYKSDDVLDLLITNALIIDYTGIYKADIGIKNGHIKAIGKSGNPHIMPGVHPDMIAGTVTEVIAGEGMIITAGGIDNHIHYICPQQMNEALASGITTFIGGGTGPATGTKATTCTPGAFHIEMMLKATDNIPMNIGFLGKGNTSHPEEIEEQIKAGALGLKLHEDWGTTPAAIDNCLSVAEKYDVQVCIHTDTLNESGFVESSRAAFKGRTIHTYHTEGAGGGHAPDIIVLCGDPDVLPSSTNPTKPFTVNTIDEHLDMLMVCHHLDRNIPEDVSFAESRIRGETIAAEDILHDMGALSMLSSDSQAMGRVGEVICRTWQTAHKMKEQRGLLEEDKQIDADNFRVKRYIAKYTINPAIAHGCSHVIGSVEVGKLADLVVWQPDFFGSRPELILKGGVIVQAQMGDPNASIPTPQPFFSRPMFGAMGKATGATSLAFVSAASEETVNGYGLNKKVTPVVGCRSVKKKDMKLNDFLPDIKVDAETYKVTVNGEWITCAPAKKLPLAQLYNLF</sequence>
<reference key="1">
    <citation type="journal article" date="2007" name="Appl. Environ. Microbiol.">
        <title>Genome sequence of the cellulolytic gliding bacterium Cytophaga hutchinsonii.</title>
        <authorList>
            <person name="Xie G."/>
            <person name="Bruce D.C."/>
            <person name="Challacombe J.F."/>
            <person name="Chertkov O."/>
            <person name="Detter J.C."/>
            <person name="Gilna P."/>
            <person name="Han C.S."/>
            <person name="Lucas S."/>
            <person name="Misra M."/>
            <person name="Myers G.L."/>
            <person name="Richardson P."/>
            <person name="Tapia R."/>
            <person name="Thayer N."/>
            <person name="Thompson L.S."/>
            <person name="Brettin T.S."/>
            <person name="Henrissat B."/>
            <person name="Wilson D.B."/>
            <person name="McBride M.J."/>
        </authorList>
    </citation>
    <scope>NUCLEOTIDE SEQUENCE [LARGE SCALE GENOMIC DNA]</scope>
    <source>
        <strain>ATCC 33406 / DSM 1761 / JCM 20678 / CIP 103989 / IAM 12607 / NBRC 15051 / NCIMB 9469 / D465</strain>
    </source>
</reference>
<organism>
    <name type="scientific">Cytophaga hutchinsonii (strain ATCC 33406 / DSM 1761 / CIP 103989 / NBRC 15051 / NCIMB 9469 / D465)</name>
    <dbReference type="NCBI Taxonomy" id="269798"/>
    <lineage>
        <taxon>Bacteria</taxon>
        <taxon>Pseudomonadati</taxon>
        <taxon>Bacteroidota</taxon>
        <taxon>Cytophagia</taxon>
        <taxon>Cytophagales</taxon>
        <taxon>Cytophagaceae</taxon>
        <taxon>Cytophaga</taxon>
    </lineage>
</organism>
<accession>Q11VN3</accession>
<feature type="chain" id="PRO_1000070655" description="Urease subunit alpha">
    <location>
        <begin position="1"/>
        <end position="570"/>
    </location>
</feature>
<feature type="domain" description="Urease" evidence="1">
    <location>
        <begin position="133"/>
        <end position="570"/>
    </location>
</feature>
<feature type="active site" description="Proton donor" evidence="1">
    <location>
        <position position="324"/>
    </location>
</feature>
<feature type="binding site" evidence="1">
    <location>
        <position position="138"/>
    </location>
    <ligand>
        <name>Ni(2+)</name>
        <dbReference type="ChEBI" id="CHEBI:49786"/>
        <label>1</label>
    </ligand>
</feature>
<feature type="binding site" evidence="1">
    <location>
        <position position="140"/>
    </location>
    <ligand>
        <name>Ni(2+)</name>
        <dbReference type="ChEBI" id="CHEBI:49786"/>
        <label>1</label>
    </ligand>
</feature>
<feature type="binding site" description="via carbamate group" evidence="1">
    <location>
        <position position="221"/>
    </location>
    <ligand>
        <name>Ni(2+)</name>
        <dbReference type="ChEBI" id="CHEBI:49786"/>
        <label>1</label>
    </ligand>
</feature>
<feature type="binding site" description="via carbamate group" evidence="1">
    <location>
        <position position="221"/>
    </location>
    <ligand>
        <name>Ni(2+)</name>
        <dbReference type="ChEBI" id="CHEBI:49786"/>
        <label>2</label>
    </ligand>
</feature>
<feature type="binding site" evidence="1">
    <location>
        <position position="223"/>
    </location>
    <ligand>
        <name>substrate</name>
    </ligand>
</feature>
<feature type="binding site" evidence="1">
    <location>
        <position position="250"/>
    </location>
    <ligand>
        <name>Ni(2+)</name>
        <dbReference type="ChEBI" id="CHEBI:49786"/>
        <label>2</label>
    </ligand>
</feature>
<feature type="binding site" evidence="1">
    <location>
        <position position="276"/>
    </location>
    <ligand>
        <name>Ni(2+)</name>
        <dbReference type="ChEBI" id="CHEBI:49786"/>
        <label>2</label>
    </ligand>
</feature>
<feature type="binding site" evidence="1">
    <location>
        <position position="364"/>
    </location>
    <ligand>
        <name>Ni(2+)</name>
        <dbReference type="ChEBI" id="CHEBI:49786"/>
        <label>1</label>
    </ligand>
</feature>
<feature type="modified residue" description="N6-carboxylysine" evidence="1">
    <location>
        <position position="221"/>
    </location>
</feature>
<comment type="catalytic activity">
    <reaction evidence="1">
        <text>urea + 2 H2O + H(+) = hydrogencarbonate + 2 NH4(+)</text>
        <dbReference type="Rhea" id="RHEA:20557"/>
        <dbReference type="ChEBI" id="CHEBI:15377"/>
        <dbReference type="ChEBI" id="CHEBI:15378"/>
        <dbReference type="ChEBI" id="CHEBI:16199"/>
        <dbReference type="ChEBI" id="CHEBI:17544"/>
        <dbReference type="ChEBI" id="CHEBI:28938"/>
        <dbReference type="EC" id="3.5.1.5"/>
    </reaction>
</comment>
<comment type="cofactor">
    <cofactor evidence="1">
        <name>Ni cation</name>
        <dbReference type="ChEBI" id="CHEBI:25516"/>
    </cofactor>
    <text evidence="1">Binds 2 nickel ions per subunit.</text>
</comment>
<comment type="pathway">
    <text evidence="1">Nitrogen metabolism; urea degradation; CO(2) and NH(3) from urea (urease route): step 1/1.</text>
</comment>
<comment type="subunit">
    <text evidence="1">Heterotrimer of UreA (gamma), UreB (beta) and UreC (alpha) subunits. Three heterotrimers associate to form the active enzyme.</text>
</comment>
<comment type="subcellular location">
    <subcellularLocation>
        <location evidence="1">Cytoplasm</location>
    </subcellularLocation>
</comment>
<comment type="PTM">
    <text evidence="1">Carboxylation allows a single lysine to coordinate two nickel ions.</text>
</comment>
<comment type="similarity">
    <text evidence="1">Belongs to the metallo-dependent hydrolases superfamily. Urease alpha subunit family.</text>
</comment>
<name>URE1_CYTH3</name>
<dbReference type="EC" id="3.5.1.5" evidence="1"/>
<dbReference type="EMBL" id="CP000383">
    <property type="protein sequence ID" value="ABG58533.1"/>
    <property type="molecule type" value="Genomic_DNA"/>
</dbReference>
<dbReference type="RefSeq" id="WP_011584648.1">
    <property type="nucleotide sequence ID" value="NC_008255.1"/>
</dbReference>
<dbReference type="SMR" id="Q11VN3"/>
<dbReference type="STRING" id="269798.CHU_1261"/>
<dbReference type="KEGG" id="chu:CHU_1261"/>
<dbReference type="eggNOG" id="COG0804">
    <property type="taxonomic scope" value="Bacteria"/>
</dbReference>
<dbReference type="HOGENOM" id="CLU_000980_0_0_10"/>
<dbReference type="OrthoDB" id="9802793at2"/>
<dbReference type="UniPathway" id="UPA00258">
    <property type="reaction ID" value="UER00370"/>
</dbReference>
<dbReference type="Proteomes" id="UP000001822">
    <property type="component" value="Chromosome"/>
</dbReference>
<dbReference type="GO" id="GO:0005737">
    <property type="term" value="C:cytoplasm"/>
    <property type="evidence" value="ECO:0007669"/>
    <property type="project" value="UniProtKB-SubCell"/>
</dbReference>
<dbReference type="GO" id="GO:0016151">
    <property type="term" value="F:nickel cation binding"/>
    <property type="evidence" value="ECO:0007669"/>
    <property type="project" value="UniProtKB-UniRule"/>
</dbReference>
<dbReference type="GO" id="GO:0009039">
    <property type="term" value="F:urease activity"/>
    <property type="evidence" value="ECO:0007669"/>
    <property type="project" value="UniProtKB-UniRule"/>
</dbReference>
<dbReference type="GO" id="GO:0043419">
    <property type="term" value="P:urea catabolic process"/>
    <property type="evidence" value="ECO:0007669"/>
    <property type="project" value="UniProtKB-UniRule"/>
</dbReference>
<dbReference type="CDD" id="cd00375">
    <property type="entry name" value="Urease_alpha"/>
    <property type="match status" value="1"/>
</dbReference>
<dbReference type="Gene3D" id="3.20.20.140">
    <property type="entry name" value="Metal-dependent hydrolases"/>
    <property type="match status" value="1"/>
</dbReference>
<dbReference type="Gene3D" id="2.30.40.10">
    <property type="entry name" value="Urease, subunit C, domain 1"/>
    <property type="match status" value="1"/>
</dbReference>
<dbReference type="HAMAP" id="MF_01953">
    <property type="entry name" value="Urease_alpha"/>
    <property type="match status" value="1"/>
</dbReference>
<dbReference type="InterPro" id="IPR006680">
    <property type="entry name" value="Amidohydro-rel"/>
</dbReference>
<dbReference type="InterPro" id="IPR011059">
    <property type="entry name" value="Metal-dep_hydrolase_composite"/>
</dbReference>
<dbReference type="InterPro" id="IPR032466">
    <property type="entry name" value="Metal_Hydrolase"/>
</dbReference>
<dbReference type="InterPro" id="IPR011612">
    <property type="entry name" value="Urease_alpha_N_dom"/>
</dbReference>
<dbReference type="InterPro" id="IPR050112">
    <property type="entry name" value="Urease_alpha_subunit"/>
</dbReference>
<dbReference type="InterPro" id="IPR017950">
    <property type="entry name" value="Urease_AS"/>
</dbReference>
<dbReference type="InterPro" id="IPR005848">
    <property type="entry name" value="Urease_asu"/>
</dbReference>
<dbReference type="InterPro" id="IPR017951">
    <property type="entry name" value="Urease_asu_c"/>
</dbReference>
<dbReference type="InterPro" id="IPR029754">
    <property type="entry name" value="Urease_Ni-bd"/>
</dbReference>
<dbReference type="NCBIfam" id="NF009686">
    <property type="entry name" value="PRK13207.1"/>
    <property type="match status" value="1"/>
</dbReference>
<dbReference type="NCBIfam" id="TIGR01792">
    <property type="entry name" value="urease_alph"/>
    <property type="match status" value="1"/>
</dbReference>
<dbReference type="PANTHER" id="PTHR43440">
    <property type="entry name" value="UREASE"/>
    <property type="match status" value="1"/>
</dbReference>
<dbReference type="PANTHER" id="PTHR43440:SF1">
    <property type="entry name" value="UREASE"/>
    <property type="match status" value="1"/>
</dbReference>
<dbReference type="Pfam" id="PF01979">
    <property type="entry name" value="Amidohydro_1"/>
    <property type="match status" value="1"/>
</dbReference>
<dbReference type="Pfam" id="PF00449">
    <property type="entry name" value="Urease_alpha"/>
    <property type="match status" value="1"/>
</dbReference>
<dbReference type="PRINTS" id="PR01752">
    <property type="entry name" value="UREASE"/>
</dbReference>
<dbReference type="SUPFAM" id="SSF51338">
    <property type="entry name" value="Composite domain of metallo-dependent hydrolases"/>
    <property type="match status" value="2"/>
</dbReference>
<dbReference type="SUPFAM" id="SSF51556">
    <property type="entry name" value="Metallo-dependent hydrolases"/>
    <property type="match status" value="1"/>
</dbReference>
<dbReference type="PROSITE" id="PS01120">
    <property type="entry name" value="UREASE_1"/>
    <property type="match status" value="1"/>
</dbReference>
<dbReference type="PROSITE" id="PS00145">
    <property type="entry name" value="UREASE_2"/>
    <property type="match status" value="1"/>
</dbReference>
<dbReference type="PROSITE" id="PS51368">
    <property type="entry name" value="UREASE_3"/>
    <property type="match status" value="1"/>
</dbReference>
<proteinExistence type="inferred from homology"/>
<evidence type="ECO:0000255" key="1">
    <source>
        <dbReference type="HAMAP-Rule" id="MF_01953"/>
    </source>
</evidence>
<protein>
    <recommendedName>
        <fullName evidence="1">Urease subunit alpha</fullName>
        <ecNumber evidence="1">3.5.1.5</ecNumber>
    </recommendedName>
    <alternativeName>
        <fullName evidence="1">Urea amidohydrolase subunit alpha</fullName>
    </alternativeName>
</protein>